<comment type="function">
    <text evidence="1">The RuvA-RuvB-RuvC complex processes Holliday junction (HJ) DNA during genetic recombination and DNA repair, while the RuvA-RuvB complex plays an important role in the rescue of blocked DNA replication forks via replication fork reversal (RFR). RuvA specifically binds to HJ cruciform DNA, conferring on it an open structure. The RuvB hexamer acts as an ATP-dependent pump, pulling dsDNA into and through the RuvAB complex. HJ branch migration allows RuvC to scan DNA until it finds its consensus sequence, where it cleaves and resolves the cruciform DNA.</text>
</comment>
<comment type="subunit">
    <text evidence="1">Homotetramer. Forms an RuvA(8)-RuvB(12)-Holliday junction (HJ) complex. HJ DNA is sandwiched between 2 RuvA tetramers; dsDNA enters through RuvA and exits via RuvB. An RuvB hexamer assembles on each DNA strand where it exits the tetramer. Each RuvB hexamer is contacted by two RuvA subunits (via domain III) on 2 adjacent RuvB subunits; this complex drives branch migration. In the full resolvosome a probable DNA-RuvA(4)-RuvB(12)-RuvC(2) complex forms which resolves the HJ.</text>
</comment>
<comment type="subcellular location">
    <subcellularLocation>
        <location evidence="1">Cytoplasm</location>
    </subcellularLocation>
</comment>
<comment type="domain">
    <text evidence="1">Has three domains with a flexible linker between the domains II and III and assumes an 'L' shape. Domain III is highly mobile and contacts RuvB.</text>
</comment>
<comment type="similarity">
    <text evidence="1">Belongs to the RuvA family.</text>
</comment>
<evidence type="ECO:0000255" key="1">
    <source>
        <dbReference type="HAMAP-Rule" id="MF_00031"/>
    </source>
</evidence>
<proteinExistence type="inferred from homology"/>
<reference key="1">
    <citation type="journal article" date="2004" name="Science">
        <title>The genomic sequence of the accidental pathogen Legionella pneumophila.</title>
        <authorList>
            <person name="Chien M."/>
            <person name="Morozova I."/>
            <person name="Shi S."/>
            <person name="Sheng H."/>
            <person name="Chen J."/>
            <person name="Gomez S.M."/>
            <person name="Asamani G."/>
            <person name="Hill K."/>
            <person name="Nuara J."/>
            <person name="Feder M."/>
            <person name="Rineer J."/>
            <person name="Greenberg J.J."/>
            <person name="Steshenko V."/>
            <person name="Park S.H."/>
            <person name="Zhao B."/>
            <person name="Teplitskaya E."/>
            <person name="Edwards J.R."/>
            <person name="Pampou S."/>
            <person name="Georghiou A."/>
            <person name="Chou I.-C."/>
            <person name="Iannuccilli W."/>
            <person name="Ulz M.E."/>
            <person name="Kim D.H."/>
            <person name="Geringer-Sameth A."/>
            <person name="Goldsberry C."/>
            <person name="Morozov P."/>
            <person name="Fischer S.G."/>
            <person name="Segal G."/>
            <person name="Qu X."/>
            <person name="Rzhetsky A."/>
            <person name="Zhang P."/>
            <person name="Cayanis E."/>
            <person name="De Jong P.J."/>
            <person name="Ju J."/>
            <person name="Kalachikov S."/>
            <person name="Shuman H.A."/>
            <person name="Russo J.J."/>
        </authorList>
    </citation>
    <scope>NUCLEOTIDE SEQUENCE [LARGE SCALE GENOMIC DNA]</scope>
    <source>
        <strain>Philadelphia 1 / ATCC 33152 / DSM 7513</strain>
    </source>
</reference>
<accession>Q5ZW00</accession>
<name>RUVA_LEGPH</name>
<dbReference type="EMBL" id="AE017354">
    <property type="protein sequence ID" value="AAU27371.1"/>
    <property type="molecule type" value="Genomic_DNA"/>
</dbReference>
<dbReference type="RefSeq" id="WP_010947019.1">
    <property type="nucleotide sequence ID" value="NC_002942.5"/>
</dbReference>
<dbReference type="RefSeq" id="YP_095318.1">
    <property type="nucleotide sequence ID" value="NC_002942.5"/>
</dbReference>
<dbReference type="SMR" id="Q5ZW00"/>
<dbReference type="STRING" id="272624.lpg1288"/>
<dbReference type="PaxDb" id="272624-lpg1288"/>
<dbReference type="GeneID" id="57035280"/>
<dbReference type="KEGG" id="lpn:lpg1288"/>
<dbReference type="PATRIC" id="fig|272624.6.peg.1356"/>
<dbReference type="eggNOG" id="COG0632">
    <property type="taxonomic scope" value="Bacteria"/>
</dbReference>
<dbReference type="HOGENOM" id="CLU_087936_0_0_6"/>
<dbReference type="OrthoDB" id="5293449at2"/>
<dbReference type="Proteomes" id="UP000000609">
    <property type="component" value="Chromosome"/>
</dbReference>
<dbReference type="GO" id="GO:0005737">
    <property type="term" value="C:cytoplasm"/>
    <property type="evidence" value="ECO:0007669"/>
    <property type="project" value="UniProtKB-SubCell"/>
</dbReference>
<dbReference type="GO" id="GO:0009379">
    <property type="term" value="C:Holliday junction helicase complex"/>
    <property type="evidence" value="ECO:0007669"/>
    <property type="project" value="InterPro"/>
</dbReference>
<dbReference type="GO" id="GO:0048476">
    <property type="term" value="C:Holliday junction resolvase complex"/>
    <property type="evidence" value="ECO:0007669"/>
    <property type="project" value="UniProtKB-UniRule"/>
</dbReference>
<dbReference type="GO" id="GO:0005524">
    <property type="term" value="F:ATP binding"/>
    <property type="evidence" value="ECO:0007669"/>
    <property type="project" value="InterPro"/>
</dbReference>
<dbReference type="GO" id="GO:0000400">
    <property type="term" value="F:four-way junction DNA binding"/>
    <property type="evidence" value="ECO:0007669"/>
    <property type="project" value="UniProtKB-UniRule"/>
</dbReference>
<dbReference type="GO" id="GO:0009378">
    <property type="term" value="F:four-way junction helicase activity"/>
    <property type="evidence" value="ECO:0007669"/>
    <property type="project" value="InterPro"/>
</dbReference>
<dbReference type="GO" id="GO:0006310">
    <property type="term" value="P:DNA recombination"/>
    <property type="evidence" value="ECO:0007669"/>
    <property type="project" value="UniProtKB-UniRule"/>
</dbReference>
<dbReference type="GO" id="GO:0006281">
    <property type="term" value="P:DNA repair"/>
    <property type="evidence" value="ECO:0007669"/>
    <property type="project" value="UniProtKB-UniRule"/>
</dbReference>
<dbReference type="CDD" id="cd14332">
    <property type="entry name" value="UBA_RuvA_C"/>
    <property type="match status" value="1"/>
</dbReference>
<dbReference type="Gene3D" id="1.10.150.20">
    <property type="entry name" value="5' to 3' exonuclease, C-terminal subdomain"/>
    <property type="match status" value="1"/>
</dbReference>
<dbReference type="Gene3D" id="1.10.8.10">
    <property type="entry name" value="DNA helicase RuvA subunit, C-terminal domain"/>
    <property type="match status" value="1"/>
</dbReference>
<dbReference type="Gene3D" id="2.40.50.140">
    <property type="entry name" value="Nucleic acid-binding proteins"/>
    <property type="match status" value="1"/>
</dbReference>
<dbReference type="HAMAP" id="MF_00031">
    <property type="entry name" value="DNA_HJ_migration_RuvA"/>
    <property type="match status" value="1"/>
</dbReference>
<dbReference type="InterPro" id="IPR013849">
    <property type="entry name" value="DNA_helicase_Holl-junc_RuvA_I"/>
</dbReference>
<dbReference type="InterPro" id="IPR003583">
    <property type="entry name" value="Hlx-hairpin-Hlx_DNA-bd_motif"/>
</dbReference>
<dbReference type="InterPro" id="IPR012340">
    <property type="entry name" value="NA-bd_OB-fold"/>
</dbReference>
<dbReference type="InterPro" id="IPR000085">
    <property type="entry name" value="RuvA"/>
</dbReference>
<dbReference type="InterPro" id="IPR010994">
    <property type="entry name" value="RuvA_2-like"/>
</dbReference>
<dbReference type="InterPro" id="IPR011114">
    <property type="entry name" value="RuvA_C"/>
</dbReference>
<dbReference type="InterPro" id="IPR036267">
    <property type="entry name" value="RuvA_C_sf"/>
</dbReference>
<dbReference type="NCBIfam" id="TIGR00084">
    <property type="entry name" value="ruvA"/>
    <property type="match status" value="1"/>
</dbReference>
<dbReference type="Pfam" id="PF14520">
    <property type="entry name" value="HHH_5"/>
    <property type="match status" value="1"/>
</dbReference>
<dbReference type="Pfam" id="PF07499">
    <property type="entry name" value="RuvA_C"/>
    <property type="match status" value="1"/>
</dbReference>
<dbReference type="Pfam" id="PF01330">
    <property type="entry name" value="RuvA_N"/>
    <property type="match status" value="1"/>
</dbReference>
<dbReference type="SMART" id="SM00278">
    <property type="entry name" value="HhH1"/>
    <property type="match status" value="2"/>
</dbReference>
<dbReference type="SUPFAM" id="SSF46929">
    <property type="entry name" value="DNA helicase RuvA subunit, C-terminal domain"/>
    <property type="match status" value="1"/>
</dbReference>
<dbReference type="SUPFAM" id="SSF50249">
    <property type="entry name" value="Nucleic acid-binding proteins"/>
    <property type="match status" value="1"/>
</dbReference>
<dbReference type="SUPFAM" id="SSF47781">
    <property type="entry name" value="RuvA domain 2-like"/>
    <property type="match status" value="1"/>
</dbReference>
<keyword id="KW-0963">Cytoplasm</keyword>
<keyword id="KW-0227">DNA damage</keyword>
<keyword id="KW-0233">DNA recombination</keyword>
<keyword id="KW-0234">DNA repair</keyword>
<keyword id="KW-0238">DNA-binding</keyword>
<keyword id="KW-1185">Reference proteome</keyword>
<gene>
    <name evidence="1" type="primary">ruvA</name>
    <name type="ordered locus">lpg1288</name>
</gene>
<organism>
    <name type="scientific">Legionella pneumophila subsp. pneumophila (strain Philadelphia 1 / ATCC 33152 / DSM 7513)</name>
    <dbReference type="NCBI Taxonomy" id="272624"/>
    <lineage>
        <taxon>Bacteria</taxon>
        <taxon>Pseudomonadati</taxon>
        <taxon>Pseudomonadota</taxon>
        <taxon>Gammaproteobacteria</taxon>
        <taxon>Legionellales</taxon>
        <taxon>Legionellaceae</taxon>
        <taxon>Legionella</taxon>
    </lineage>
</organism>
<feature type="chain" id="PRO_0000224879" description="Holliday junction branch migration complex subunit RuvA">
    <location>
        <begin position="1"/>
        <end position="199"/>
    </location>
</feature>
<feature type="region of interest" description="Domain I" evidence="1">
    <location>
        <begin position="1"/>
        <end position="65"/>
    </location>
</feature>
<feature type="region of interest" description="Domain II" evidence="1">
    <location>
        <begin position="66"/>
        <end position="144"/>
    </location>
</feature>
<feature type="region of interest" description="Flexible linker" evidence="1">
    <location>
        <begin position="144"/>
        <end position="148"/>
    </location>
</feature>
<feature type="region of interest" description="Domain III" evidence="1">
    <location>
        <begin position="149"/>
        <end position="199"/>
    </location>
</feature>
<protein>
    <recommendedName>
        <fullName evidence="1">Holliday junction branch migration complex subunit RuvA</fullName>
    </recommendedName>
</protein>
<sequence>MIGWLHGQIIDKHQPGKLVLDVNGVGYDVETSLNTFFQIENGNQPVGLHIHTIVREDALLLYGFLDKEERSLFRSLIKVNGVGPKLAMTVLSSISPKEFIQCIHQENAALLTKLPGIGKKTAERLVVEMRDSIKQFDGSVSDTFQKQAGSTHSQQEAISALEALGYKPQEAWKVMNKIDNGNKSCEQLIREALQILSSR</sequence>